<feature type="chain" id="PRO_1000073900" description="Endoribonuclease YbeY">
    <location>
        <begin position="1"/>
        <end position="165"/>
    </location>
</feature>
<feature type="binding site" evidence="1">
    <location>
        <position position="131"/>
    </location>
    <ligand>
        <name>Zn(2+)</name>
        <dbReference type="ChEBI" id="CHEBI:29105"/>
        <note>catalytic</note>
    </ligand>
</feature>
<feature type="binding site" evidence="1">
    <location>
        <position position="135"/>
    </location>
    <ligand>
        <name>Zn(2+)</name>
        <dbReference type="ChEBI" id="CHEBI:29105"/>
        <note>catalytic</note>
    </ligand>
</feature>
<feature type="binding site" evidence="1">
    <location>
        <position position="141"/>
    </location>
    <ligand>
        <name>Zn(2+)</name>
        <dbReference type="ChEBI" id="CHEBI:29105"/>
        <note>catalytic</note>
    </ligand>
</feature>
<dbReference type="EC" id="3.1.-.-" evidence="1"/>
<dbReference type="EMBL" id="CP000885">
    <property type="protein sequence ID" value="ABX42970.1"/>
    <property type="molecule type" value="Genomic_DNA"/>
</dbReference>
<dbReference type="RefSeq" id="WP_012200622.1">
    <property type="nucleotide sequence ID" value="NC_010001.1"/>
</dbReference>
<dbReference type="SMR" id="A9KMV9"/>
<dbReference type="STRING" id="357809.Cphy_2609"/>
<dbReference type="KEGG" id="cpy:Cphy_2609"/>
<dbReference type="eggNOG" id="COG0319">
    <property type="taxonomic scope" value="Bacteria"/>
</dbReference>
<dbReference type="HOGENOM" id="CLU_106710_3_0_9"/>
<dbReference type="OrthoDB" id="9807740at2"/>
<dbReference type="Proteomes" id="UP000000370">
    <property type="component" value="Chromosome"/>
</dbReference>
<dbReference type="GO" id="GO:0005737">
    <property type="term" value="C:cytoplasm"/>
    <property type="evidence" value="ECO:0007669"/>
    <property type="project" value="UniProtKB-SubCell"/>
</dbReference>
<dbReference type="GO" id="GO:0004222">
    <property type="term" value="F:metalloendopeptidase activity"/>
    <property type="evidence" value="ECO:0007669"/>
    <property type="project" value="InterPro"/>
</dbReference>
<dbReference type="GO" id="GO:0004521">
    <property type="term" value="F:RNA endonuclease activity"/>
    <property type="evidence" value="ECO:0007669"/>
    <property type="project" value="UniProtKB-UniRule"/>
</dbReference>
<dbReference type="GO" id="GO:0008270">
    <property type="term" value="F:zinc ion binding"/>
    <property type="evidence" value="ECO:0007669"/>
    <property type="project" value="UniProtKB-UniRule"/>
</dbReference>
<dbReference type="GO" id="GO:0006364">
    <property type="term" value="P:rRNA processing"/>
    <property type="evidence" value="ECO:0007669"/>
    <property type="project" value="UniProtKB-UniRule"/>
</dbReference>
<dbReference type="Gene3D" id="3.40.390.30">
    <property type="entry name" value="Metalloproteases ('zincins'), catalytic domain"/>
    <property type="match status" value="1"/>
</dbReference>
<dbReference type="HAMAP" id="MF_00009">
    <property type="entry name" value="Endoribonucl_YbeY"/>
    <property type="match status" value="1"/>
</dbReference>
<dbReference type="InterPro" id="IPR023091">
    <property type="entry name" value="MetalPrtase_cat_dom_sf_prd"/>
</dbReference>
<dbReference type="InterPro" id="IPR002036">
    <property type="entry name" value="YbeY"/>
</dbReference>
<dbReference type="NCBIfam" id="TIGR00043">
    <property type="entry name" value="rRNA maturation RNase YbeY"/>
    <property type="match status" value="1"/>
</dbReference>
<dbReference type="PANTHER" id="PTHR46986">
    <property type="entry name" value="ENDORIBONUCLEASE YBEY, CHLOROPLASTIC"/>
    <property type="match status" value="1"/>
</dbReference>
<dbReference type="PANTHER" id="PTHR46986:SF1">
    <property type="entry name" value="ENDORIBONUCLEASE YBEY, CHLOROPLASTIC"/>
    <property type="match status" value="1"/>
</dbReference>
<dbReference type="Pfam" id="PF02130">
    <property type="entry name" value="YbeY"/>
    <property type="match status" value="1"/>
</dbReference>
<dbReference type="SUPFAM" id="SSF55486">
    <property type="entry name" value="Metalloproteases ('zincins'), catalytic domain"/>
    <property type="match status" value="1"/>
</dbReference>
<proteinExistence type="inferred from homology"/>
<organism>
    <name type="scientific">Lachnoclostridium phytofermentans (strain ATCC 700394 / DSM 18823 / ISDg)</name>
    <name type="common">Clostridium phytofermentans</name>
    <dbReference type="NCBI Taxonomy" id="357809"/>
    <lineage>
        <taxon>Bacteria</taxon>
        <taxon>Bacillati</taxon>
        <taxon>Bacillota</taxon>
        <taxon>Clostridia</taxon>
        <taxon>Lachnospirales</taxon>
        <taxon>Lachnospiraceae</taxon>
    </lineage>
</organism>
<protein>
    <recommendedName>
        <fullName evidence="1">Endoribonuclease YbeY</fullName>
        <ecNumber evidence="1">3.1.-.-</ecNumber>
    </recommendedName>
</protein>
<sequence>MTIHIEKETEVNFDFNEEVLIKEVIEAALDYEECPYETEINVVLTNNEEIKEINKEYREIDAPTDVLSFPMVEFNEPSDFEHVEEEQEDCFHPDSGELMLGDIIVSVDKVFSQAKEFGHSEKRELGFLIAHSMLHLCGYDHMEEEEREVMEERQRAILDRIHLSR</sequence>
<accession>A9KMV9</accession>
<name>YBEY_LACP7</name>
<reference key="1">
    <citation type="submission" date="2007-11" db="EMBL/GenBank/DDBJ databases">
        <title>Complete genome sequence of Clostridium phytofermentans ISDg.</title>
        <authorList>
            <person name="Leschine S.B."/>
            <person name="Warnick T.A."/>
            <person name="Blanchard J.L."/>
            <person name="Schnell D.J."/>
            <person name="Petit E.L."/>
            <person name="LaTouf W.G."/>
            <person name="Copeland A."/>
            <person name="Lucas S."/>
            <person name="Lapidus A."/>
            <person name="Barry K."/>
            <person name="Glavina del Rio T."/>
            <person name="Dalin E."/>
            <person name="Tice H."/>
            <person name="Pitluck S."/>
            <person name="Kiss H."/>
            <person name="Brettin T."/>
            <person name="Bruce D."/>
            <person name="Detter J.C."/>
            <person name="Han C."/>
            <person name="Kuske C."/>
            <person name="Schmutz J."/>
            <person name="Larimer F."/>
            <person name="Land M."/>
            <person name="Hauser L."/>
            <person name="Kyrpides N."/>
            <person name="Kim E.A."/>
            <person name="Richardson P."/>
        </authorList>
    </citation>
    <scope>NUCLEOTIDE SEQUENCE [LARGE SCALE GENOMIC DNA]</scope>
    <source>
        <strain>ATCC 700394 / DSM 18823 / ISDg</strain>
    </source>
</reference>
<gene>
    <name evidence="1" type="primary">ybeY</name>
    <name type="ordered locus">Cphy_2609</name>
</gene>
<comment type="function">
    <text evidence="1">Single strand-specific metallo-endoribonuclease involved in late-stage 70S ribosome quality control and in maturation of the 3' terminus of the 16S rRNA.</text>
</comment>
<comment type="cofactor">
    <cofactor evidence="1">
        <name>Zn(2+)</name>
        <dbReference type="ChEBI" id="CHEBI:29105"/>
    </cofactor>
    <text evidence="1">Binds 1 zinc ion.</text>
</comment>
<comment type="subcellular location">
    <subcellularLocation>
        <location evidence="1">Cytoplasm</location>
    </subcellularLocation>
</comment>
<comment type="similarity">
    <text evidence="1">Belongs to the endoribonuclease YbeY family.</text>
</comment>
<evidence type="ECO:0000255" key="1">
    <source>
        <dbReference type="HAMAP-Rule" id="MF_00009"/>
    </source>
</evidence>
<keyword id="KW-0963">Cytoplasm</keyword>
<keyword id="KW-0255">Endonuclease</keyword>
<keyword id="KW-0378">Hydrolase</keyword>
<keyword id="KW-0479">Metal-binding</keyword>
<keyword id="KW-0540">Nuclease</keyword>
<keyword id="KW-1185">Reference proteome</keyword>
<keyword id="KW-0690">Ribosome biogenesis</keyword>
<keyword id="KW-0698">rRNA processing</keyword>
<keyword id="KW-0862">Zinc</keyword>